<keyword id="KW-1185">Reference proteome</keyword>
<keyword id="KW-0687">Ribonucleoprotein</keyword>
<keyword id="KW-0689">Ribosomal protein</keyword>
<organism>
    <name type="scientific">Stenotrophomonas maltophilia (strain K279a)</name>
    <dbReference type="NCBI Taxonomy" id="522373"/>
    <lineage>
        <taxon>Bacteria</taxon>
        <taxon>Pseudomonadati</taxon>
        <taxon>Pseudomonadota</taxon>
        <taxon>Gammaproteobacteria</taxon>
        <taxon>Lysobacterales</taxon>
        <taxon>Lysobacteraceae</taxon>
        <taxon>Stenotrophomonas</taxon>
        <taxon>Stenotrophomonas maltophilia group</taxon>
    </lineage>
</organism>
<comment type="similarity">
    <text evidence="1">Belongs to the bacterial ribosomal protein bS16 family.</text>
</comment>
<proteinExistence type="inferred from homology"/>
<evidence type="ECO:0000255" key="1">
    <source>
        <dbReference type="HAMAP-Rule" id="MF_00385"/>
    </source>
</evidence>
<evidence type="ECO:0000305" key="2"/>
<reference key="1">
    <citation type="journal article" date="2008" name="Genome Biol.">
        <title>The complete genome, comparative and functional analysis of Stenotrophomonas maltophilia reveals an organism heavily shielded by drug resistance determinants.</title>
        <authorList>
            <person name="Crossman L.C."/>
            <person name="Gould V.C."/>
            <person name="Dow J.M."/>
            <person name="Vernikos G.S."/>
            <person name="Okazaki A."/>
            <person name="Sebaihia M."/>
            <person name="Saunders D."/>
            <person name="Arrowsmith C."/>
            <person name="Carver T."/>
            <person name="Peters N."/>
            <person name="Adlem E."/>
            <person name="Kerhornou A."/>
            <person name="Lord A."/>
            <person name="Murphy L."/>
            <person name="Seeger K."/>
            <person name="Squares R."/>
            <person name="Rutter S."/>
            <person name="Quail M.A."/>
            <person name="Rajandream M.A."/>
            <person name="Harris D."/>
            <person name="Churcher C."/>
            <person name="Bentley S.D."/>
            <person name="Parkhill J."/>
            <person name="Thomson N.R."/>
            <person name="Avison M.B."/>
        </authorList>
    </citation>
    <scope>NUCLEOTIDE SEQUENCE [LARGE SCALE GENOMIC DNA]</scope>
    <source>
        <strain>K279a</strain>
    </source>
</reference>
<dbReference type="EMBL" id="AM743169">
    <property type="protein sequence ID" value="CAQ44919.1"/>
    <property type="molecule type" value="Genomic_DNA"/>
</dbReference>
<dbReference type="RefSeq" id="WP_005408594.1">
    <property type="nucleotide sequence ID" value="NC_010943.1"/>
</dbReference>
<dbReference type="SMR" id="B2FUB3"/>
<dbReference type="EnsemblBacteria" id="CAQ44919">
    <property type="protein sequence ID" value="CAQ44919"/>
    <property type="gene ID" value="Smlt1374"/>
</dbReference>
<dbReference type="GeneID" id="93832479"/>
<dbReference type="KEGG" id="sml:Smlt1374"/>
<dbReference type="eggNOG" id="COG0228">
    <property type="taxonomic scope" value="Bacteria"/>
</dbReference>
<dbReference type="HOGENOM" id="CLU_100590_5_1_6"/>
<dbReference type="Proteomes" id="UP000008840">
    <property type="component" value="Chromosome"/>
</dbReference>
<dbReference type="GO" id="GO:0005737">
    <property type="term" value="C:cytoplasm"/>
    <property type="evidence" value="ECO:0007669"/>
    <property type="project" value="UniProtKB-ARBA"/>
</dbReference>
<dbReference type="GO" id="GO:0015935">
    <property type="term" value="C:small ribosomal subunit"/>
    <property type="evidence" value="ECO:0007669"/>
    <property type="project" value="TreeGrafter"/>
</dbReference>
<dbReference type="GO" id="GO:0003735">
    <property type="term" value="F:structural constituent of ribosome"/>
    <property type="evidence" value="ECO:0007669"/>
    <property type="project" value="InterPro"/>
</dbReference>
<dbReference type="GO" id="GO:0006412">
    <property type="term" value="P:translation"/>
    <property type="evidence" value="ECO:0007669"/>
    <property type="project" value="UniProtKB-UniRule"/>
</dbReference>
<dbReference type="FunFam" id="3.30.1320.10:FF:000008">
    <property type="entry name" value="30S ribosomal protein S16"/>
    <property type="match status" value="1"/>
</dbReference>
<dbReference type="Gene3D" id="3.30.1320.10">
    <property type="match status" value="1"/>
</dbReference>
<dbReference type="HAMAP" id="MF_00385">
    <property type="entry name" value="Ribosomal_bS16"/>
    <property type="match status" value="1"/>
</dbReference>
<dbReference type="InterPro" id="IPR000307">
    <property type="entry name" value="Ribosomal_bS16"/>
</dbReference>
<dbReference type="InterPro" id="IPR020592">
    <property type="entry name" value="Ribosomal_bS16_CS"/>
</dbReference>
<dbReference type="InterPro" id="IPR023803">
    <property type="entry name" value="Ribosomal_bS16_dom_sf"/>
</dbReference>
<dbReference type="NCBIfam" id="TIGR00002">
    <property type="entry name" value="S16"/>
    <property type="match status" value="1"/>
</dbReference>
<dbReference type="PANTHER" id="PTHR12919">
    <property type="entry name" value="30S RIBOSOMAL PROTEIN S16"/>
    <property type="match status" value="1"/>
</dbReference>
<dbReference type="PANTHER" id="PTHR12919:SF20">
    <property type="entry name" value="SMALL RIBOSOMAL SUBUNIT PROTEIN BS16M"/>
    <property type="match status" value="1"/>
</dbReference>
<dbReference type="Pfam" id="PF00886">
    <property type="entry name" value="Ribosomal_S16"/>
    <property type="match status" value="1"/>
</dbReference>
<dbReference type="SUPFAM" id="SSF54565">
    <property type="entry name" value="Ribosomal protein S16"/>
    <property type="match status" value="1"/>
</dbReference>
<dbReference type="PROSITE" id="PS00732">
    <property type="entry name" value="RIBOSOMAL_S16"/>
    <property type="match status" value="1"/>
</dbReference>
<protein>
    <recommendedName>
        <fullName evidence="1">Small ribosomal subunit protein bS16</fullName>
    </recommendedName>
    <alternativeName>
        <fullName evidence="2">30S ribosomal protein S16</fullName>
    </alternativeName>
</protein>
<gene>
    <name evidence="1" type="primary">rpsP</name>
    <name type="ordered locus">Smlt1374</name>
</gene>
<feature type="chain" id="PRO_1000196475" description="Small ribosomal subunit protein bS16">
    <location>
        <begin position="1"/>
        <end position="86"/>
    </location>
</feature>
<accession>B2FUB3</accession>
<name>RS16_STRMK</name>
<sequence>MVKIRLTRGGAKKRPFYHIIVTDVRSARDGRNIERVGFYNPVAQGGEKRIELDLARVDHWVKNGAQPTDKVRNLIKEATKSQAAAA</sequence>